<dbReference type="EC" id="2.7.8.7" evidence="1"/>
<dbReference type="EMBL" id="CP000526">
    <property type="protein sequence ID" value="ABM51846.1"/>
    <property type="molecule type" value="Genomic_DNA"/>
</dbReference>
<dbReference type="RefSeq" id="WP_004191194.1">
    <property type="nucleotide sequence ID" value="NC_008785.1"/>
</dbReference>
<dbReference type="SMR" id="A1V6B3"/>
<dbReference type="GeneID" id="93061005"/>
<dbReference type="KEGG" id="bmv:BMASAVP1_A2462"/>
<dbReference type="HOGENOM" id="CLU_089696_3_1_4"/>
<dbReference type="GO" id="GO:0005737">
    <property type="term" value="C:cytoplasm"/>
    <property type="evidence" value="ECO:0007669"/>
    <property type="project" value="UniProtKB-SubCell"/>
</dbReference>
<dbReference type="GO" id="GO:0008897">
    <property type="term" value="F:holo-[acyl-carrier-protein] synthase activity"/>
    <property type="evidence" value="ECO:0007669"/>
    <property type="project" value="UniProtKB-UniRule"/>
</dbReference>
<dbReference type="GO" id="GO:0000287">
    <property type="term" value="F:magnesium ion binding"/>
    <property type="evidence" value="ECO:0007669"/>
    <property type="project" value="UniProtKB-UniRule"/>
</dbReference>
<dbReference type="GO" id="GO:0006633">
    <property type="term" value="P:fatty acid biosynthetic process"/>
    <property type="evidence" value="ECO:0007669"/>
    <property type="project" value="UniProtKB-UniRule"/>
</dbReference>
<dbReference type="Gene3D" id="3.90.470.20">
    <property type="entry name" value="4'-phosphopantetheinyl transferase domain"/>
    <property type="match status" value="1"/>
</dbReference>
<dbReference type="HAMAP" id="MF_00101">
    <property type="entry name" value="AcpS"/>
    <property type="match status" value="1"/>
</dbReference>
<dbReference type="InterPro" id="IPR008278">
    <property type="entry name" value="4-PPantetheinyl_Trfase_dom"/>
</dbReference>
<dbReference type="InterPro" id="IPR037143">
    <property type="entry name" value="4-PPantetheinyl_Trfase_dom_sf"/>
</dbReference>
<dbReference type="InterPro" id="IPR002582">
    <property type="entry name" value="ACPS"/>
</dbReference>
<dbReference type="InterPro" id="IPR004568">
    <property type="entry name" value="Ppantetheine-prot_Trfase_dom"/>
</dbReference>
<dbReference type="NCBIfam" id="TIGR00516">
    <property type="entry name" value="acpS"/>
    <property type="match status" value="1"/>
</dbReference>
<dbReference type="NCBIfam" id="TIGR00556">
    <property type="entry name" value="pantethn_trn"/>
    <property type="match status" value="1"/>
</dbReference>
<dbReference type="Pfam" id="PF01648">
    <property type="entry name" value="ACPS"/>
    <property type="match status" value="1"/>
</dbReference>
<dbReference type="SUPFAM" id="SSF56214">
    <property type="entry name" value="4'-phosphopantetheinyl transferase"/>
    <property type="match status" value="1"/>
</dbReference>
<gene>
    <name evidence="1" type="primary">acpS</name>
    <name type="ordered locus">BMASAVP1_A2462</name>
</gene>
<sequence length="143" mass="15364">MAIYGIGTDLAQVSRIAAVLERTGGRFAEKVLGPDELRVFHARRARSEARGIAFLATRFSAKEAFSKAIGLGMHWPMTWRALQTLNRPSGEPYVVASGELAAWLDARGITARVTVSDERDYAVTFVVAEAPDDVAAARSGAAS</sequence>
<keyword id="KW-0963">Cytoplasm</keyword>
<keyword id="KW-0275">Fatty acid biosynthesis</keyword>
<keyword id="KW-0276">Fatty acid metabolism</keyword>
<keyword id="KW-0444">Lipid biosynthesis</keyword>
<keyword id="KW-0443">Lipid metabolism</keyword>
<keyword id="KW-0460">Magnesium</keyword>
<keyword id="KW-0479">Metal-binding</keyword>
<keyword id="KW-0808">Transferase</keyword>
<comment type="function">
    <text evidence="1">Transfers the 4'-phosphopantetheine moiety from coenzyme A to a Ser of acyl-carrier-protein.</text>
</comment>
<comment type="catalytic activity">
    <reaction evidence="1">
        <text>apo-[ACP] + CoA = holo-[ACP] + adenosine 3',5'-bisphosphate + H(+)</text>
        <dbReference type="Rhea" id="RHEA:12068"/>
        <dbReference type="Rhea" id="RHEA-COMP:9685"/>
        <dbReference type="Rhea" id="RHEA-COMP:9690"/>
        <dbReference type="ChEBI" id="CHEBI:15378"/>
        <dbReference type="ChEBI" id="CHEBI:29999"/>
        <dbReference type="ChEBI" id="CHEBI:57287"/>
        <dbReference type="ChEBI" id="CHEBI:58343"/>
        <dbReference type="ChEBI" id="CHEBI:64479"/>
        <dbReference type="EC" id="2.7.8.7"/>
    </reaction>
</comment>
<comment type="cofactor">
    <cofactor evidence="1">
        <name>Mg(2+)</name>
        <dbReference type="ChEBI" id="CHEBI:18420"/>
    </cofactor>
</comment>
<comment type="subcellular location">
    <subcellularLocation>
        <location evidence="1">Cytoplasm</location>
    </subcellularLocation>
</comment>
<comment type="similarity">
    <text evidence="1">Belongs to the P-Pant transferase superfamily. AcpS family.</text>
</comment>
<organism>
    <name type="scientific">Burkholderia mallei (strain SAVP1)</name>
    <dbReference type="NCBI Taxonomy" id="320388"/>
    <lineage>
        <taxon>Bacteria</taxon>
        <taxon>Pseudomonadati</taxon>
        <taxon>Pseudomonadota</taxon>
        <taxon>Betaproteobacteria</taxon>
        <taxon>Burkholderiales</taxon>
        <taxon>Burkholderiaceae</taxon>
        <taxon>Burkholderia</taxon>
        <taxon>pseudomallei group</taxon>
    </lineage>
</organism>
<reference key="1">
    <citation type="journal article" date="2010" name="Genome Biol. Evol.">
        <title>Continuing evolution of Burkholderia mallei through genome reduction and large-scale rearrangements.</title>
        <authorList>
            <person name="Losada L."/>
            <person name="Ronning C.M."/>
            <person name="DeShazer D."/>
            <person name="Woods D."/>
            <person name="Fedorova N."/>
            <person name="Kim H.S."/>
            <person name="Shabalina S.A."/>
            <person name="Pearson T.R."/>
            <person name="Brinkac L."/>
            <person name="Tan P."/>
            <person name="Nandi T."/>
            <person name="Crabtree J."/>
            <person name="Badger J."/>
            <person name="Beckstrom-Sternberg S."/>
            <person name="Saqib M."/>
            <person name="Schutzer S.E."/>
            <person name="Keim P."/>
            <person name="Nierman W.C."/>
        </authorList>
    </citation>
    <scope>NUCLEOTIDE SEQUENCE [LARGE SCALE GENOMIC DNA]</scope>
    <source>
        <strain>SAVP1</strain>
    </source>
</reference>
<feature type="chain" id="PRO_1000008399" description="Holo-[acyl-carrier-protein] synthase">
    <location>
        <begin position="1"/>
        <end position="143"/>
    </location>
</feature>
<feature type="binding site" evidence="1">
    <location>
        <position position="9"/>
    </location>
    <ligand>
        <name>Mg(2+)</name>
        <dbReference type="ChEBI" id="CHEBI:18420"/>
    </ligand>
</feature>
<feature type="binding site" evidence="1">
    <location>
        <position position="63"/>
    </location>
    <ligand>
        <name>Mg(2+)</name>
        <dbReference type="ChEBI" id="CHEBI:18420"/>
    </ligand>
</feature>
<accession>A1V6B3</accession>
<proteinExistence type="inferred from homology"/>
<evidence type="ECO:0000255" key="1">
    <source>
        <dbReference type="HAMAP-Rule" id="MF_00101"/>
    </source>
</evidence>
<protein>
    <recommendedName>
        <fullName evidence="1">Holo-[acyl-carrier-protein] synthase</fullName>
        <shortName evidence="1">Holo-ACP synthase</shortName>
        <ecNumber evidence="1">2.7.8.7</ecNumber>
    </recommendedName>
    <alternativeName>
        <fullName evidence="1">4'-phosphopantetheinyl transferase AcpS</fullName>
    </alternativeName>
</protein>
<name>ACPS_BURMS</name>